<proteinExistence type="evidence at protein level"/>
<accession>P75884</accession>
<evidence type="ECO:0000255" key="1">
    <source>
        <dbReference type="PROSITE-ProRule" id="PRU00303"/>
    </source>
</evidence>
<evidence type="ECO:0000305" key="2"/>
<evidence type="ECO:0007829" key="3">
    <source>
        <dbReference type="PDB" id="2IN5"/>
    </source>
</evidence>
<comment type="subcellular location">
    <subcellularLocation>
        <location evidence="1">Cell membrane</location>
        <topology evidence="1">Lipid-anchor</topology>
    </subcellularLocation>
</comment>
<comment type="similarity">
    <text evidence="2">To E.coli YjbF.</text>
</comment>
<comment type="caution">
    <text evidence="2">In E.coli K12 / MG1655 and K12 / W3110 this operon is silenced by an IS1D insertion in the promoter region.</text>
</comment>
<name>GFCB_ECOLI</name>
<feature type="signal peptide" evidence="1">
    <location>
        <begin position="1"/>
        <end position="15"/>
    </location>
</feature>
<feature type="chain" id="PRO_0000018055" description="Uncharacterized lipoprotein GfcB">
    <location>
        <begin position="16"/>
        <end position="214"/>
    </location>
</feature>
<feature type="lipid moiety-binding region" description="N-palmitoyl cysteine" evidence="1">
    <location>
        <position position="16"/>
    </location>
</feature>
<feature type="lipid moiety-binding region" description="S-diacylglycerol cysteine" evidence="1">
    <location>
        <position position="16"/>
    </location>
</feature>
<feature type="helix" evidence="3">
    <location>
        <begin position="23"/>
        <end position="33"/>
    </location>
</feature>
<feature type="helix" evidence="3">
    <location>
        <begin position="41"/>
        <end position="46"/>
    </location>
</feature>
<feature type="strand" evidence="3">
    <location>
        <begin position="51"/>
        <end position="56"/>
    </location>
</feature>
<feature type="strand" evidence="3">
    <location>
        <begin position="62"/>
        <end position="70"/>
    </location>
</feature>
<feature type="strand" evidence="3">
    <location>
        <begin position="73"/>
        <end position="77"/>
    </location>
</feature>
<feature type="strand" evidence="3">
    <location>
        <begin position="83"/>
        <end position="87"/>
    </location>
</feature>
<feature type="strand" evidence="3">
    <location>
        <begin position="90"/>
        <end position="99"/>
    </location>
</feature>
<feature type="strand" evidence="3">
    <location>
        <begin position="101"/>
        <end position="106"/>
    </location>
</feature>
<feature type="helix" evidence="3">
    <location>
        <begin position="107"/>
        <end position="109"/>
    </location>
</feature>
<feature type="helix" evidence="3">
    <location>
        <begin position="111"/>
        <end position="117"/>
    </location>
</feature>
<feature type="strand" evidence="3">
    <location>
        <begin position="123"/>
        <end position="132"/>
    </location>
</feature>
<feature type="strand" evidence="3">
    <location>
        <begin position="135"/>
        <end position="155"/>
    </location>
</feature>
<feature type="strand" evidence="3">
    <location>
        <begin position="158"/>
        <end position="171"/>
    </location>
</feature>
<feature type="turn" evidence="3">
    <location>
        <begin position="172"/>
        <end position="175"/>
    </location>
</feature>
<feature type="strand" evidence="3">
    <location>
        <begin position="176"/>
        <end position="185"/>
    </location>
</feature>
<feature type="turn" evidence="3">
    <location>
        <begin position="186"/>
        <end position="188"/>
    </location>
</feature>
<feature type="strand" evidence="3">
    <location>
        <begin position="191"/>
        <end position="201"/>
    </location>
</feature>
<feature type="strand" evidence="3">
    <location>
        <begin position="203"/>
        <end position="209"/>
    </location>
</feature>
<reference key="1">
    <citation type="journal article" date="1996" name="DNA Res.">
        <title>A 718-kb DNA sequence of the Escherichia coli K-12 genome corresponding to the 12.7-28.0 min region on the linkage map.</title>
        <authorList>
            <person name="Oshima T."/>
            <person name="Aiba H."/>
            <person name="Baba T."/>
            <person name="Fujita K."/>
            <person name="Hayashi K."/>
            <person name="Honjo A."/>
            <person name="Ikemoto K."/>
            <person name="Inada T."/>
            <person name="Itoh T."/>
            <person name="Kajihara M."/>
            <person name="Kanai K."/>
            <person name="Kashimoto K."/>
            <person name="Kimura S."/>
            <person name="Kitagawa M."/>
            <person name="Makino K."/>
            <person name="Masuda S."/>
            <person name="Miki T."/>
            <person name="Mizobuchi K."/>
            <person name="Mori H."/>
            <person name="Motomura K."/>
            <person name="Nakamura Y."/>
            <person name="Nashimoto H."/>
            <person name="Nishio Y."/>
            <person name="Saito N."/>
            <person name="Sampei G."/>
            <person name="Seki Y."/>
            <person name="Tagami H."/>
            <person name="Takemoto K."/>
            <person name="Wada C."/>
            <person name="Yamamoto Y."/>
            <person name="Yano M."/>
            <person name="Horiuchi T."/>
        </authorList>
    </citation>
    <scope>NUCLEOTIDE SEQUENCE [LARGE SCALE GENOMIC DNA]</scope>
    <source>
        <strain>K12 / W3110 / ATCC 27325 / DSM 5911</strain>
    </source>
</reference>
<reference key="2">
    <citation type="journal article" date="1997" name="Science">
        <title>The complete genome sequence of Escherichia coli K-12.</title>
        <authorList>
            <person name="Blattner F.R."/>
            <person name="Plunkett G. III"/>
            <person name="Bloch C.A."/>
            <person name="Perna N.T."/>
            <person name="Burland V."/>
            <person name="Riley M."/>
            <person name="Collado-Vides J."/>
            <person name="Glasner J.D."/>
            <person name="Rode C.K."/>
            <person name="Mayhew G.F."/>
            <person name="Gregor J."/>
            <person name="Davis N.W."/>
            <person name="Kirkpatrick H.A."/>
            <person name="Goeden M.A."/>
            <person name="Rose D.J."/>
            <person name="Mau B."/>
            <person name="Shao Y."/>
        </authorList>
    </citation>
    <scope>NUCLEOTIDE SEQUENCE [LARGE SCALE GENOMIC DNA]</scope>
    <source>
        <strain>K12 / MG1655 / ATCC 47076</strain>
    </source>
</reference>
<reference key="3">
    <citation type="journal article" date="2006" name="Mol. Syst. Biol.">
        <title>Highly accurate genome sequences of Escherichia coli K-12 strains MG1655 and W3110.</title>
        <authorList>
            <person name="Hayashi K."/>
            <person name="Morooka N."/>
            <person name="Yamamoto Y."/>
            <person name="Fujita K."/>
            <person name="Isono K."/>
            <person name="Choi S."/>
            <person name="Ohtsubo E."/>
            <person name="Baba T."/>
            <person name="Wanner B.L."/>
            <person name="Mori H."/>
            <person name="Horiuchi T."/>
        </authorList>
    </citation>
    <scope>NUCLEOTIDE SEQUENCE [LARGE SCALE GENOMIC DNA]</scope>
    <source>
        <strain>K12 / W3110 / ATCC 27325 / DSM 5911</strain>
    </source>
</reference>
<reference key="4">
    <citation type="submission" date="2006-11" db="PDB data bank">
        <title>Crystal structure of the hypothetical lipoprotein ymcC from Escherichia coli (K12), Northeast structural genomics target ER552.</title>
        <authorList>
            <consortium name="Northeast structural genomics consortium (NESG)"/>
        </authorList>
    </citation>
    <scope>X-RAY CRYSTALLOGRAPHY (2.3 ANGSTROMS) OF 17-214</scope>
</reference>
<protein>
    <recommendedName>
        <fullName>Uncharacterized lipoprotein GfcB</fullName>
    </recommendedName>
    <alternativeName>
        <fullName>Group 4 capsule protein B homolog</fullName>
    </alternativeName>
</protein>
<keyword id="KW-0002">3D-structure</keyword>
<keyword id="KW-1003">Cell membrane</keyword>
<keyword id="KW-0449">Lipoprotein</keyword>
<keyword id="KW-0472">Membrane</keyword>
<keyword id="KW-0564">Palmitate</keyword>
<keyword id="KW-1185">Reference proteome</keyword>
<keyword id="KW-0732">Signal</keyword>
<organism>
    <name type="scientific">Escherichia coli (strain K12)</name>
    <dbReference type="NCBI Taxonomy" id="83333"/>
    <lineage>
        <taxon>Bacteria</taxon>
        <taxon>Pseudomonadati</taxon>
        <taxon>Pseudomonadota</taxon>
        <taxon>Gammaproteobacteria</taxon>
        <taxon>Enterobacterales</taxon>
        <taxon>Enterobacteriaceae</taxon>
        <taxon>Escherichia</taxon>
    </lineage>
</organism>
<dbReference type="EMBL" id="U00096">
    <property type="protein sequence ID" value="AAC74071.1"/>
    <property type="molecule type" value="Genomic_DNA"/>
</dbReference>
<dbReference type="EMBL" id="AP009048">
    <property type="protein sequence ID" value="BAA35751.1"/>
    <property type="molecule type" value="Genomic_DNA"/>
</dbReference>
<dbReference type="PIR" id="H64839">
    <property type="entry name" value="H64839"/>
</dbReference>
<dbReference type="RefSeq" id="NP_415506.1">
    <property type="nucleotide sequence ID" value="NC_000913.3"/>
</dbReference>
<dbReference type="RefSeq" id="WP_001247610.1">
    <property type="nucleotide sequence ID" value="NZ_STEB01000006.1"/>
</dbReference>
<dbReference type="PDB" id="2IN5">
    <property type="method" value="X-ray"/>
    <property type="resolution" value="2.30 A"/>
    <property type="chains" value="A/B=17-214"/>
</dbReference>
<dbReference type="PDBsum" id="2IN5"/>
<dbReference type="SMR" id="P75884"/>
<dbReference type="DIP" id="DIP-12709N"/>
<dbReference type="FunCoup" id="P75884">
    <property type="interactions" value="34"/>
</dbReference>
<dbReference type="IntAct" id="P75884">
    <property type="interactions" value="1"/>
</dbReference>
<dbReference type="STRING" id="511145.b0986"/>
<dbReference type="PaxDb" id="511145-b0986"/>
<dbReference type="EnsemblBacteria" id="AAC74071">
    <property type="protein sequence ID" value="AAC74071"/>
    <property type="gene ID" value="b0986"/>
</dbReference>
<dbReference type="GeneID" id="949118"/>
<dbReference type="KEGG" id="ecj:JW0969"/>
<dbReference type="KEGG" id="eco:b0986"/>
<dbReference type="KEGG" id="ecoc:C3026_06010"/>
<dbReference type="PATRIC" id="fig|1411691.4.peg.1287"/>
<dbReference type="EchoBASE" id="EB3495"/>
<dbReference type="eggNOG" id="ENOG502ZAMG">
    <property type="taxonomic scope" value="Bacteria"/>
</dbReference>
<dbReference type="HOGENOM" id="CLU_098990_1_0_6"/>
<dbReference type="InParanoid" id="P75884"/>
<dbReference type="OMA" id="WTENRQP"/>
<dbReference type="OrthoDB" id="5591889at2"/>
<dbReference type="PhylomeDB" id="P75884"/>
<dbReference type="BioCyc" id="EcoCyc:G6507-MONOMER"/>
<dbReference type="EvolutionaryTrace" id="P75884"/>
<dbReference type="PRO" id="PR:P75884"/>
<dbReference type="Proteomes" id="UP000000625">
    <property type="component" value="Chromosome"/>
</dbReference>
<dbReference type="GO" id="GO:0005886">
    <property type="term" value="C:plasma membrane"/>
    <property type="evidence" value="ECO:0007669"/>
    <property type="project" value="UniProtKB-SubCell"/>
</dbReference>
<dbReference type="Gene3D" id="2.40.360.10">
    <property type="entry name" value="YmcC-like"/>
    <property type="match status" value="1"/>
</dbReference>
<dbReference type="InterPro" id="IPR021308">
    <property type="entry name" value="GfcB"/>
</dbReference>
<dbReference type="InterPro" id="IPR023373">
    <property type="entry name" value="YmcC_sf"/>
</dbReference>
<dbReference type="Pfam" id="PF11102">
    <property type="entry name" value="YjbF"/>
    <property type="match status" value="1"/>
</dbReference>
<dbReference type="SUPFAM" id="SSF159270">
    <property type="entry name" value="YmcC-like"/>
    <property type="match status" value="1"/>
</dbReference>
<dbReference type="PROSITE" id="PS51257">
    <property type="entry name" value="PROKAR_LIPOPROTEIN"/>
    <property type="match status" value="1"/>
</dbReference>
<gene>
    <name type="primary">gfcB</name>
    <name type="synonym">ymcC</name>
    <name type="ordered locus">b0986</name>
    <name type="ordered locus">JW0969</name>
</gene>
<sequence length="214" mass="24268">MRPLILSIFALFLAGCTHSQQSMVDTFRASLFDNQDITVADQQIQALPYSTMYLRLNEGQRIFVVLGYIEQEQSKWLSQDNAMLVTHNGRLLKTVKLNNNLLEVTNSGQDPLRNALAIKDGSRWTRDILWSEDNHFRSATLSSTFSFAGLETLNIAGRNVLCNVWQEEVTSTRPEKQWQNTFWVDSATGQVRQSRQMLGAGVIPVEMTFLKPAP</sequence>